<comment type="similarity">
    <text evidence="1">Belongs to the UPF0758 family. YicR subfamily.</text>
</comment>
<protein>
    <recommendedName>
        <fullName evidence="1">UPF0758 protein YicR</fullName>
    </recommendedName>
</protein>
<sequence length="221" mass="24936">MDTLDELLPREKMLRSGIASLSDVELLALFLRTGTPGKDVMTLAKEILQHFGSLYGLLSADFAQFRGVNGIGLAKFAQLKGIAELARRYYSVRMNEESALLSPEMTREFLQSQLTCEEREIFLVIFLDAQHRVLQHSRLFSGTLNHVEVHPREIVREAIKLNASAVILAHNHPSGCAEPSKADKLITERVIKCCQFMDIRVLDHLIIGRGEYVSFAERGWI</sequence>
<dbReference type="EMBL" id="CP001113">
    <property type="protein sequence ID" value="ACF64086.1"/>
    <property type="molecule type" value="Genomic_DNA"/>
</dbReference>
<dbReference type="SMR" id="B4SXE0"/>
<dbReference type="KEGG" id="see:SNSL254_A4009"/>
<dbReference type="HOGENOM" id="CLU_073529_0_1_6"/>
<dbReference type="Proteomes" id="UP000008824">
    <property type="component" value="Chromosome"/>
</dbReference>
<dbReference type="GO" id="GO:0046872">
    <property type="term" value="F:metal ion binding"/>
    <property type="evidence" value="ECO:0007669"/>
    <property type="project" value="UniProtKB-KW"/>
</dbReference>
<dbReference type="GO" id="GO:0008237">
    <property type="term" value="F:metallopeptidase activity"/>
    <property type="evidence" value="ECO:0007669"/>
    <property type="project" value="UniProtKB-KW"/>
</dbReference>
<dbReference type="GO" id="GO:0006508">
    <property type="term" value="P:proteolysis"/>
    <property type="evidence" value="ECO:0007669"/>
    <property type="project" value="UniProtKB-KW"/>
</dbReference>
<dbReference type="CDD" id="cd08071">
    <property type="entry name" value="MPN_DUF2466"/>
    <property type="match status" value="1"/>
</dbReference>
<dbReference type="Gene3D" id="3.40.140.10">
    <property type="entry name" value="Cytidine Deaminase, domain 2"/>
    <property type="match status" value="1"/>
</dbReference>
<dbReference type="HAMAP" id="MF_00018">
    <property type="entry name" value="UPF0758_YicR"/>
    <property type="match status" value="1"/>
</dbReference>
<dbReference type="InterPro" id="IPR037518">
    <property type="entry name" value="MPN"/>
</dbReference>
<dbReference type="InterPro" id="IPR025657">
    <property type="entry name" value="RadC_JAB"/>
</dbReference>
<dbReference type="InterPro" id="IPR010994">
    <property type="entry name" value="RuvA_2-like"/>
</dbReference>
<dbReference type="InterPro" id="IPR001405">
    <property type="entry name" value="UPF0758"/>
</dbReference>
<dbReference type="InterPro" id="IPR020891">
    <property type="entry name" value="UPF0758_CS"/>
</dbReference>
<dbReference type="InterPro" id="IPR046778">
    <property type="entry name" value="UPF0758_N"/>
</dbReference>
<dbReference type="InterPro" id="IPR022820">
    <property type="entry name" value="UPF0758_YicR"/>
</dbReference>
<dbReference type="NCBIfam" id="NF000642">
    <property type="entry name" value="PRK00024.1"/>
    <property type="match status" value="1"/>
</dbReference>
<dbReference type="NCBIfam" id="TIGR00608">
    <property type="entry name" value="radc"/>
    <property type="match status" value="1"/>
</dbReference>
<dbReference type="PANTHER" id="PTHR30471">
    <property type="entry name" value="DNA REPAIR PROTEIN RADC"/>
    <property type="match status" value="1"/>
</dbReference>
<dbReference type="PANTHER" id="PTHR30471:SF3">
    <property type="entry name" value="UPF0758 PROTEIN YEES-RELATED"/>
    <property type="match status" value="1"/>
</dbReference>
<dbReference type="Pfam" id="PF04002">
    <property type="entry name" value="RadC"/>
    <property type="match status" value="1"/>
</dbReference>
<dbReference type="Pfam" id="PF20582">
    <property type="entry name" value="UPF0758_N"/>
    <property type="match status" value="1"/>
</dbReference>
<dbReference type="SUPFAM" id="SSF47781">
    <property type="entry name" value="RuvA domain 2-like"/>
    <property type="match status" value="1"/>
</dbReference>
<dbReference type="PROSITE" id="PS50249">
    <property type="entry name" value="MPN"/>
    <property type="match status" value="1"/>
</dbReference>
<dbReference type="PROSITE" id="PS01302">
    <property type="entry name" value="UPF0758"/>
    <property type="match status" value="1"/>
</dbReference>
<accession>B4SXE0</accession>
<name>YICR_SALNS</name>
<proteinExistence type="inferred from homology"/>
<reference key="1">
    <citation type="journal article" date="2011" name="J. Bacteriol.">
        <title>Comparative genomics of 28 Salmonella enterica isolates: evidence for CRISPR-mediated adaptive sublineage evolution.</title>
        <authorList>
            <person name="Fricke W.F."/>
            <person name="Mammel M.K."/>
            <person name="McDermott P.F."/>
            <person name="Tartera C."/>
            <person name="White D.G."/>
            <person name="Leclerc J.E."/>
            <person name="Ravel J."/>
            <person name="Cebula T.A."/>
        </authorList>
    </citation>
    <scope>NUCLEOTIDE SEQUENCE [LARGE SCALE GENOMIC DNA]</scope>
    <source>
        <strain>SL254</strain>
    </source>
</reference>
<evidence type="ECO:0000255" key="1">
    <source>
        <dbReference type="HAMAP-Rule" id="MF_00018"/>
    </source>
</evidence>
<evidence type="ECO:0000255" key="2">
    <source>
        <dbReference type="PROSITE-ProRule" id="PRU01182"/>
    </source>
</evidence>
<organism>
    <name type="scientific">Salmonella newport (strain SL254)</name>
    <dbReference type="NCBI Taxonomy" id="423368"/>
    <lineage>
        <taxon>Bacteria</taxon>
        <taxon>Pseudomonadati</taxon>
        <taxon>Pseudomonadota</taxon>
        <taxon>Gammaproteobacteria</taxon>
        <taxon>Enterobacterales</taxon>
        <taxon>Enterobacteriaceae</taxon>
        <taxon>Salmonella</taxon>
    </lineage>
</organism>
<feature type="chain" id="PRO_1000089842" description="UPF0758 protein YicR">
    <location>
        <begin position="1"/>
        <end position="221"/>
    </location>
</feature>
<feature type="domain" description="MPN" evidence="2">
    <location>
        <begin position="99"/>
        <end position="221"/>
    </location>
</feature>
<feature type="short sequence motif" description="JAMM motif" evidence="2">
    <location>
        <begin position="170"/>
        <end position="183"/>
    </location>
</feature>
<feature type="binding site" evidence="2">
    <location>
        <position position="170"/>
    </location>
    <ligand>
        <name>Zn(2+)</name>
        <dbReference type="ChEBI" id="CHEBI:29105"/>
        <note>catalytic</note>
    </ligand>
</feature>
<feature type="binding site" evidence="2">
    <location>
        <position position="172"/>
    </location>
    <ligand>
        <name>Zn(2+)</name>
        <dbReference type="ChEBI" id="CHEBI:29105"/>
        <note>catalytic</note>
    </ligand>
</feature>
<feature type="binding site" evidence="2">
    <location>
        <position position="183"/>
    </location>
    <ligand>
        <name>Zn(2+)</name>
        <dbReference type="ChEBI" id="CHEBI:29105"/>
        <note>catalytic</note>
    </ligand>
</feature>
<gene>
    <name evidence="1" type="primary">yicR</name>
    <name type="ordered locus">SNSL254_A4009</name>
</gene>
<keyword id="KW-0378">Hydrolase</keyword>
<keyword id="KW-0479">Metal-binding</keyword>
<keyword id="KW-0482">Metalloprotease</keyword>
<keyword id="KW-0645">Protease</keyword>
<keyword id="KW-0862">Zinc</keyword>